<protein>
    <recommendedName>
        <fullName evidence="1">2-C-methyl-D-erythritol 2,4-cyclodiphosphate synthase</fullName>
        <shortName evidence="1">MECDP-synthase</shortName>
        <shortName evidence="1">MECPP-synthase</shortName>
        <shortName evidence="1">MECPS</shortName>
        <ecNumber evidence="1">4.6.1.12</ecNumber>
    </recommendedName>
</protein>
<organism>
    <name type="scientific">Alkaliphilus metalliredigens (strain QYMF)</name>
    <dbReference type="NCBI Taxonomy" id="293826"/>
    <lineage>
        <taxon>Bacteria</taxon>
        <taxon>Bacillati</taxon>
        <taxon>Bacillota</taxon>
        <taxon>Clostridia</taxon>
        <taxon>Peptostreptococcales</taxon>
        <taxon>Natronincolaceae</taxon>
        <taxon>Alkaliphilus</taxon>
    </lineage>
</organism>
<keyword id="KW-0414">Isoprene biosynthesis</keyword>
<keyword id="KW-0456">Lyase</keyword>
<keyword id="KW-0479">Metal-binding</keyword>
<keyword id="KW-1185">Reference proteome</keyword>
<proteinExistence type="inferred from homology"/>
<gene>
    <name evidence="1" type="primary">ispF</name>
    <name type="ordered locus">Amet_4505</name>
</gene>
<comment type="function">
    <text evidence="1">Involved in the biosynthesis of isopentenyl diphosphate (IPP) and dimethylallyl diphosphate (DMAPP), two major building blocks of isoprenoid compounds. Catalyzes the conversion of 4-diphosphocytidyl-2-C-methyl-D-erythritol 2-phosphate (CDP-ME2P) to 2-C-methyl-D-erythritol 2,4-cyclodiphosphate (ME-CPP) with a corresponding release of cytidine 5-monophosphate (CMP).</text>
</comment>
<comment type="catalytic activity">
    <reaction evidence="1">
        <text>4-CDP-2-C-methyl-D-erythritol 2-phosphate = 2-C-methyl-D-erythritol 2,4-cyclic diphosphate + CMP</text>
        <dbReference type="Rhea" id="RHEA:23864"/>
        <dbReference type="ChEBI" id="CHEBI:57919"/>
        <dbReference type="ChEBI" id="CHEBI:58483"/>
        <dbReference type="ChEBI" id="CHEBI:60377"/>
        <dbReference type="EC" id="4.6.1.12"/>
    </reaction>
</comment>
<comment type="cofactor">
    <cofactor evidence="1">
        <name>a divalent metal cation</name>
        <dbReference type="ChEBI" id="CHEBI:60240"/>
    </cofactor>
    <text evidence="1">Binds 1 divalent metal cation per subunit.</text>
</comment>
<comment type="pathway">
    <text evidence="1">Isoprenoid biosynthesis; isopentenyl diphosphate biosynthesis via DXP pathway; isopentenyl diphosphate from 1-deoxy-D-xylulose 5-phosphate: step 4/6.</text>
</comment>
<comment type="subunit">
    <text evidence="1">Homotrimer.</text>
</comment>
<comment type="similarity">
    <text evidence="1">Belongs to the IspF family.</text>
</comment>
<dbReference type="EC" id="4.6.1.12" evidence="1"/>
<dbReference type="EMBL" id="CP000724">
    <property type="protein sequence ID" value="ABR50577.1"/>
    <property type="molecule type" value="Genomic_DNA"/>
</dbReference>
<dbReference type="RefSeq" id="WP_012065468.1">
    <property type="nucleotide sequence ID" value="NC_009633.1"/>
</dbReference>
<dbReference type="SMR" id="A6TWK9"/>
<dbReference type="STRING" id="293826.Amet_4505"/>
<dbReference type="KEGG" id="amt:Amet_4505"/>
<dbReference type="eggNOG" id="COG0245">
    <property type="taxonomic scope" value="Bacteria"/>
</dbReference>
<dbReference type="HOGENOM" id="CLU_084630_2_0_9"/>
<dbReference type="OrthoDB" id="9804336at2"/>
<dbReference type="UniPathway" id="UPA00056">
    <property type="reaction ID" value="UER00095"/>
</dbReference>
<dbReference type="Proteomes" id="UP000001572">
    <property type="component" value="Chromosome"/>
</dbReference>
<dbReference type="GO" id="GO:0008685">
    <property type="term" value="F:2-C-methyl-D-erythritol 2,4-cyclodiphosphate synthase activity"/>
    <property type="evidence" value="ECO:0007669"/>
    <property type="project" value="UniProtKB-UniRule"/>
</dbReference>
<dbReference type="GO" id="GO:0046872">
    <property type="term" value="F:metal ion binding"/>
    <property type="evidence" value="ECO:0007669"/>
    <property type="project" value="UniProtKB-KW"/>
</dbReference>
<dbReference type="GO" id="GO:0019288">
    <property type="term" value="P:isopentenyl diphosphate biosynthetic process, methylerythritol 4-phosphate pathway"/>
    <property type="evidence" value="ECO:0007669"/>
    <property type="project" value="UniProtKB-UniRule"/>
</dbReference>
<dbReference type="GO" id="GO:0016114">
    <property type="term" value="P:terpenoid biosynthetic process"/>
    <property type="evidence" value="ECO:0007669"/>
    <property type="project" value="InterPro"/>
</dbReference>
<dbReference type="CDD" id="cd00554">
    <property type="entry name" value="MECDP_synthase"/>
    <property type="match status" value="1"/>
</dbReference>
<dbReference type="FunFam" id="3.30.1330.50:FF:000001">
    <property type="entry name" value="2-C-methyl-D-erythritol 2,4-cyclodiphosphate synthase"/>
    <property type="match status" value="1"/>
</dbReference>
<dbReference type="Gene3D" id="3.30.1330.50">
    <property type="entry name" value="2-C-methyl-D-erythritol 2,4-cyclodiphosphate synthase"/>
    <property type="match status" value="1"/>
</dbReference>
<dbReference type="HAMAP" id="MF_00107">
    <property type="entry name" value="IspF"/>
    <property type="match status" value="1"/>
</dbReference>
<dbReference type="InterPro" id="IPR003526">
    <property type="entry name" value="MECDP_synthase"/>
</dbReference>
<dbReference type="InterPro" id="IPR020555">
    <property type="entry name" value="MECDP_synthase_CS"/>
</dbReference>
<dbReference type="InterPro" id="IPR036571">
    <property type="entry name" value="MECDP_synthase_sf"/>
</dbReference>
<dbReference type="NCBIfam" id="TIGR00151">
    <property type="entry name" value="ispF"/>
    <property type="match status" value="1"/>
</dbReference>
<dbReference type="PANTHER" id="PTHR43181">
    <property type="entry name" value="2-C-METHYL-D-ERYTHRITOL 2,4-CYCLODIPHOSPHATE SYNTHASE, CHLOROPLASTIC"/>
    <property type="match status" value="1"/>
</dbReference>
<dbReference type="PANTHER" id="PTHR43181:SF1">
    <property type="entry name" value="2-C-METHYL-D-ERYTHRITOL 2,4-CYCLODIPHOSPHATE SYNTHASE, CHLOROPLASTIC"/>
    <property type="match status" value="1"/>
</dbReference>
<dbReference type="Pfam" id="PF02542">
    <property type="entry name" value="YgbB"/>
    <property type="match status" value="1"/>
</dbReference>
<dbReference type="SUPFAM" id="SSF69765">
    <property type="entry name" value="IpsF-like"/>
    <property type="match status" value="1"/>
</dbReference>
<dbReference type="PROSITE" id="PS01350">
    <property type="entry name" value="ISPF"/>
    <property type="match status" value="1"/>
</dbReference>
<name>ISPF_ALKMQ</name>
<accession>A6TWK9</accession>
<sequence>MRVGIGYDVHRLVEGRKLIVGGVEIPHEKGLLGHSDADVLLHAIKDALLGAVALGDIGKHFPDTDEKYKGESSLYLLNEVGRMLAEKAYVANNIDATIIAQEPKMAPYIELMRRNIAEVLGIKVEQVNIKATTTEGIGFVGRGEGIAAQAIVSVGQSLG</sequence>
<reference key="1">
    <citation type="journal article" date="2016" name="Genome Announc.">
        <title>Complete genome sequence of Alkaliphilus metalliredigens strain QYMF, an alkaliphilic and metal-reducing bacterium isolated from borax-contaminated leachate ponds.</title>
        <authorList>
            <person name="Hwang C."/>
            <person name="Copeland A."/>
            <person name="Lucas S."/>
            <person name="Lapidus A."/>
            <person name="Barry K."/>
            <person name="Detter J.C."/>
            <person name="Glavina Del Rio T."/>
            <person name="Hammon N."/>
            <person name="Israni S."/>
            <person name="Dalin E."/>
            <person name="Tice H."/>
            <person name="Pitluck S."/>
            <person name="Chertkov O."/>
            <person name="Brettin T."/>
            <person name="Bruce D."/>
            <person name="Han C."/>
            <person name="Schmutz J."/>
            <person name="Larimer F."/>
            <person name="Land M.L."/>
            <person name="Hauser L."/>
            <person name="Kyrpides N."/>
            <person name="Mikhailova N."/>
            <person name="Ye Q."/>
            <person name="Zhou J."/>
            <person name="Richardson P."/>
            <person name="Fields M.W."/>
        </authorList>
    </citation>
    <scope>NUCLEOTIDE SEQUENCE [LARGE SCALE GENOMIC DNA]</scope>
    <source>
        <strain>QYMF</strain>
    </source>
</reference>
<feature type="chain" id="PRO_1000057705" description="2-C-methyl-D-erythritol 2,4-cyclodiphosphate synthase">
    <location>
        <begin position="1"/>
        <end position="159"/>
    </location>
</feature>
<feature type="binding site" evidence="1">
    <location>
        <begin position="8"/>
        <end position="10"/>
    </location>
    <ligand>
        <name>4-CDP-2-C-methyl-D-erythritol 2-phosphate</name>
        <dbReference type="ChEBI" id="CHEBI:57919"/>
    </ligand>
</feature>
<feature type="binding site" evidence="1">
    <location>
        <position position="8"/>
    </location>
    <ligand>
        <name>a divalent metal cation</name>
        <dbReference type="ChEBI" id="CHEBI:60240"/>
    </ligand>
</feature>
<feature type="binding site" evidence="1">
    <location>
        <position position="10"/>
    </location>
    <ligand>
        <name>a divalent metal cation</name>
        <dbReference type="ChEBI" id="CHEBI:60240"/>
    </ligand>
</feature>
<feature type="binding site" evidence="1">
    <location>
        <begin position="34"/>
        <end position="35"/>
    </location>
    <ligand>
        <name>4-CDP-2-C-methyl-D-erythritol 2-phosphate</name>
        <dbReference type="ChEBI" id="CHEBI:57919"/>
    </ligand>
</feature>
<feature type="binding site" evidence="1">
    <location>
        <position position="42"/>
    </location>
    <ligand>
        <name>a divalent metal cation</name>
        <dbReference type="ChEBI" id="CHEBI:60240"/>
    </ligand>
</feature>
<feature type="binding site" evidence="1">
    <location>
        <begin position="56"/>
        <end position="58"/>
    </location>
    <ligand>
        <name>4-CDP-2-C-methyl-D-erythritol 2-phosphate</name>
        <dbReference type="ChEBI" id="CHEBI:57919"/>
    </ligand>
</feature>
<feature type="binding site" evidence="1">
    <location>
        <begin position="61"/>
        <end position="65"/>
    </location>
    <ligand>
        <name>4-CDP-2-C-methyl-D-erythritol 2-phosphate</name>
        <dbReference type="ChEBI" id="CHEBI:57919"/>
    </ligand>
</feature>
<feature type="binding site" evidence="1">
    <location>
        <begin position="100"/>
        <end position="106"/>
    </location>
    <ligand>
        <name>4-CDP-2-C-methyl-D-erythritol 2-phosphate</name>
        <dbReference type="ChEBI" id="CHEBI:57919"/>
    </ligand>
</feature>
<feature type="binding site" evidence="1">
    <location>
        <begin position="132"/>
        <end position="135"/>
    </location>
    <ligand>
        <name>4-CDP-2-C-methyl-D-erythritol 2-phosphate</name>
        <dbReference type="ChEBI" id="CHEBI:57919"/>
    </ligand>
</feature>
<feature type="binding site" evidence="1">
    <location>
        <position position="139"/>
    </location>
    <ligand>
        <name>4-CDP-2-C-methyl-D-erythritol 2-phosphate</name>
        <dbReference type="ChEBI" id="CHEBI:57919"/>
    </ligand>
</feature>
<feature type="binding site" evidence="1">
    <location>
        <position position="142"/>
    </location>
    <ligand>
        <name>4-CDP-2-C-methyl-D-erythritol 2-phosphate</name>
        <dbReference type="ChEBI" id="CHEBI:57919"/>
    </ligand>
</feature>
<feature type="site" description="Transition state stabilizer" evidence="1">
    <location>
        <position position="34"/>
    </location>
</feature>
<feature type="site" description="Transition state stabilizer" evidence="1">
    <location>
        <position position="133"/>
    </location>
</feature>
<evidence type="ECO:0000255" key="1">
    <source>
        <dbReference type="HAMAP-Rule" id="MF_00107"/>
    </source>
</evidence>